<sequence>MARYCGPKNRVARRFGANIFGRSRNPLLKKPHPPGQHGMQRKKKSDYGLQLEEKQKLKACYGMIMEKQLVKAFKEVIHKQGNVAQMFLERFECRLDNMVYRMGFAKTIFAAQQLVAHGHILVNGRRVDRRSFFLRPGMQISLKEKSKRLQSVKDALESKDESSLPSYISLDKTGFKGELLVSPEQDQIEAQLPLPINISVVCEFLSHRT</sequence>
<dbReference type="EMBL" id="AE001363">
    <property type="protein sequence ID" value="AAD18872.1"/>
    <property type="molecule type" value="Genomic_DNA"/>
</dbReference>
<dbReference type="EMBL" id="AE002161">
    <property type="protein sequence ID" value="AAF37909.1"/>
    <property type="molecule type" value="Genomic_DNA"/>
</dbReference>
<dbReference type="EMBL" id="BA000008">
    <property type="protein sequence ID" value="BAA98940.1"/>
    <property type="molecule type" value="Genomic_DNA"/>
</dbReference>
<dbReference type="EMBL" id="AE009440">
    <property type="protein sequence ID" value="AAP98690.1"/>
    <property type="molecule type" value="Genomic_DNA"/>
</dbReference>
<dbReference type="PIR" id="A72043">
    <property type="entry name" value="A72043"/>
</dbReference>
<dbReference type="PIR" id="B86582">
    <property type="entry name" value="B86582"/>
</dbReference>
<dbReference type="RefSeq" id="NP_224929.1">
    <property type="nucleotide sequence ID" value="NC_000922.1"/>
</dbReference>
<dbReference type="RefSeq" id="WP_010883371.1">
    <property type="nucleotide sequence ID" value="NZ_LN847257.1"/>
</dbReference>
<dbReference type="SMR" id="Q9Z7H2"/>
<dbReference type="STRING" id="406984.CPK_ORF00139"/>
<dbReference type="DrugCentral" id="Q9Z7H2"/>
<dbReference type="GeneID" id="45050788"/>
<dbReference type="KEGG" id="cpa:CP_0013"/>
<dbReference type="KEGG" id="cpj:rs4"/>
<dbReference type="KEGG" id="cpn:CPn_0733"/>
<dbReference type="KEGG" id="cpt:CpB0761"/>
<dbReference type="PATRIC" id="fig|115713.3.peg.809"/>
<dbReference type="eggNOG" id="COG0522">
    <property type="taxonomic scope" value="Bacteria"/>
</dbReference>
<dbReference type="HOGENOM" id="CLU_092403_0_1_0"/>
<dbReference type="OMA" id="QLVVELY"/>
<dbReference type="OrthoDB" id="9803672at2"/>
<dbReference type="Proteomes" id="UP000000583">
    <property type="component" value="Chromosome"/>
</dbReference>
<dbReference type="Proteomes" id="UP000000801">
    <property type="component" value="Chromosome"/>
</dbReference>
<dbReference type="GO" id="GO:0015935">
    <property type="term" value="C:small ribosomal subunit"/>
    <property type="evidence" value="ECO:0007669"/>
    <property type="project" value="InterPro"/>
</dbReference>
<dbReference type="GO" id="GO:0019843">
    <property type="term" value="F:rRNA binding"/>
    <property type="evidence" value="ECO:0007669"/>
    <property type="project" value="UniProtKB-UniRule"/>
</dbReference>
<dbReference type="GO" id="GO:0003735">
    <property type="term" value="F:structural constituent of ribosome"/>
    <property type="evidence" value="ECO:0007669"/>
    <property type="project" value="InterPro"/>
</dbReference>
<dbReference type="GO" id="GO:0042274">
    <property type="term" value="P:ribosomal small subunit biogenesis"/>
    <property type="evidence" value="ECO:0007669"/>
    <property type="project" value="TreeGrafter"/>
</dbReference>
<dbReference type="GO" id="GO:0006412">
    <property type="term" value="P:translation"/>
    <property type="evidence" value="ECO:0007669"/>
    <property type="project" value="UniProtKB-UniRule"/>
</dbReference>
<dbReference type="CDD" id="cd00165">
    <property type="entry name" value="S4"/>
    <property type="match status" value="1"/>
</dbReference>
<dbReference type="FunFam" id="3.10.290.10:FF:000001">
    <property type="entry name" value="30S ribosomal protein S4"/>
    <property type="match status" value="1"/>
</dbReference>
<dbReference type="Gene3D" id="1.10.1050.10">
    <property type="entry name" value="Ribosomal Protein S4 Delta 41, Chain A, domain 1"/>
    <property type="match status" value="1"/>
</dbReference>
<dbReference type="Gene3D" id="3.10.290.10">
    <property type="entry name" value="RNA-binding S4 domain"/>
    <property type="match status" value="1"/>
</dbReference>
<dbReference type="HAMAP" id="MF_01306_B">
    <property type="entry name" value="Ribosomal_uS4_B"/>
    <property type="match status" value="1"/>
</dbReference>
<dbReference type="InterPro" id="IPR022801">
    <property type="entry name" value="Ribosomal_uS4"/>
</dbReference>
<dbReference type="InterPro" id="IPR005709">
    <property type="entry name" value="Ribosomal_uS4_bac-type"/>
</dbReference>
<dbReference type="InterPro" id="IPR001912">
    <property type="entry name" value="Ribosomal_uS4_N"/>
</dbReference>
<dbReference type="InterPro" id="IPR002942">
    <property type="entry name" value="S4_RNA-bd"/>
</dbReference>
<dbReference type="InterPro" id="IPR036986">
    <property type="entry name" value="S4_RNA-bd_sf"/>
</dbReference>
<dbReference type="NCBIfam" id="NF003717">
    <property type="entry name" value="PRK05327.1"/>
    <property type="match status" value="1"/>
</dbReference>
<dbReference type="NCBIfam" id="TIGR01017">
    <property type="entry name" value="rpsD_bact"/>
    <property type="match status" value="1"/>
</dbReference>
<dbReference type="PANTHER" id="PTHR11831">
    <property type="entry name" value="30S 40S RIBOSOMAL PROTEIN"/>
    <property type="match status" value="1"/>
</dbReference>
<dbReference type="PANTHER" id="PTHR11831:SF4">
    <property type="entry name" value="SMALL RIBOSOMAL SUBUNIT PROTEIN US4M"/>
    <property type="match status" value="1"/>
</dbReference>
<dbReference type="Pfam" id="PF00163">
    <property type="entry name" value="Ribosomal_S4"/>
    <property type="match status" value="1"/>
</dbReference>
<dbReference type="Pfam" id="PF01479">
    <property type="entry name" value="S4"/>
    <property type="match status" value="1"/>
</dbReference>
<dbReference type="SMART" id="SM01390">
    <property type="entry name" value="Ribosomal_S4"/>
    <property type="match status" value="1"/>
</dbReference>
<dbReference type="SMART" id="SM00363">
    <property type="entry name" value="S4"/>
    <property type="match status" value="1"/>
</dbReference>
<dbReference type="SUPFAM" id="SSF55174">
    <property type="entry name" value="Alpha-L RNA-binding motif"/>
    <property type="match status" value="1"/>
</dbReference>
<dbReference type="PROSITE" id="PS50889">
    <property type="entry name" value="S4"/>
    <property type="match status" value="1"/>
</dbReference>
<evidence type="ECO:0000255" key="1">
    <source>
        <dbReference type="HAMAP-Rule" id="MF_01306"/>
    </source>
</evidence>
<evidence type="ECO:0000256" key="2">
    <source>
        <dbReference type="SAM" id="MobiDB-lite"/>
    </source>
</evidence>
<evidence type="ECO:0000305" key="3"/>
<comment type="function">
    <text evidence="1">One of the primary rRNA binding proteins, it binds directly to 16S rRNA where it nucleates assembly of the body of the 30S subunit.</text>
</comment>
<comment type="function">
    <text evidence="1">With S5 and S12 plays an important role in translational accuracy.</text>
</comment>
<comment type="subunit">
    <text evidence="1">Part of the 30S ribosomal subunit. Contacts protein S5. The interaction surface between S4 and S5 is involved in control of translational fidelity.</text>
</comment>
<comment type="similarity">
    <text evidence="1">Belongs to the universal ribosomal protein uS4 family.</text>
</comment>
<feature type="chain" id="PRO_0000132363" description="Small ribosomal subunit protein uS4">
    <location>
        <begin position="1"/>
        <end position="209"/>
    </location>
</feature>
<feature type="domain" description="S4 RNA-binding" evidence="1">
    <location>
        <begin position="93"/>
        <end position="153"/>
    </location>
</feature>
<feature type="region of interest" description="Disordered" evidence="2">
    <location>
        <begin position="23"/>
        <end position="46"/>
    </location>
</feature>
<proteinExistence type="inferred from homology"/>
<name>RS4_CHLPN</name>
<keyword id="KW-0687">Ribonucleoprotein</keyword>
<keyword id="KW-0689">Ribosomal protein</keyword>
<keyword id="KW-0694">RNA-binding</keyword>
<keyword id="KW-0699">rRNA-binding</keyword>
<protein>
    <recommendedName>
        <fullName evidence="1">Small ribosomal subunit protein uS4</fullName>
    </recommendedName>
    <alternativeName>
        <fullName evidence="3">30S ribosomal protein S4</fullName>
    </alternativeName>
</protein>
<gene>
    <name evidence="1" type="primary">rpsD</name>
    <name type="synonym">rs4</name>
    <name type="ordered locus">CPn_0733</name>
    <name type="ordered locus">CP_0013</name>
    <name type="ordered locus">CpB0761</name>
</gene>
<organism>
    <name type="scientific">Chlamydia pneumoniae</name>
    <name type="common">Chlamydophila pneumoniae</name>
    <dbReference type="NCBI Taxonomy" id="83558"/>
    <lineage>
        <taxon>Bacteria</taxon>
        <taxon>Pseudomonadati</taxon>
        <taxon>Chlamydiota</taxon>
        <taxon>Chlamydiia</taxon>
        <taxon>Chlamydiales</taxon>
        <taxon>Chlamydiaceae</taxon>
        <taxon>Chlamydia/Chlamydophila group</taxon>
        <taxon>Chlamydia</taxon>
    </lineage>
</organism>
<reference key="1">
    <citation type="journal article" date="1999" name="Nat. Genet.">
        <title>Comparative genomes of Chlamydia pneumoniae and C. trachomatis.</title>
        <authorList>
            <person name="Kalman S."/>
            <person name="Mitchell W.P."/>
            <person name="Marathe R."/>
            <person name="Lammel C.J."/>
            <person name="Fan J."/>
            <person name="Hyman R.W."/>
            <person name="Olinger L."/>
            <person name="Grimwood J."/>
            <person name="Davis R.W."/>
            <person name="Stephens R.S."/>
        </authorList>
    </citation>
    <scope>NUCLEOTIDE SEQUENCE [LARGE SCALE GENOMIC DNA]</scope>
    <source>
        <strain>CWL029</strain>
    </source>
</reference>
<reference key="2">
    <citation type="journal article" date="2000" name="Nucleic Acids Res.">
        <title>Genome sequences of Chlamydia trachomatis MoPn and Chlamydia pneumoniae AR39.</title>
        <authorList>
            <person name="Read T.D."/>
            <person name="Brunham R.C."/>
            <person name="Shen C."/>
            <person name="Gill S.R."/>
            <person name="Heidelberg J.F."/>
            <person name="White O."/>
            <person name="Hickey E.K."/>
            <person name="Peterson J.D."/>
            <person name="Utterback T.R."/>
            <person name="Berry K.J."/>
            <person name="Bass S."/>
            <person name="Linher K.D."/>
            <person name="Weidman J.F."/>
            <person name="Khouri H.M."/>
            <person name="Craven B."/>
            <person name="Bowman C."/>
            <person name="Dodson R.J."/>
            <person name="Gwinn M.L."/>
            <person name="Nelson W.C."/>
            <person name="DeBoy R.T."/>
            <person name="Kolonay J.F."/>
            <person name="McClarty G."/>
            <person name="Salzberg S.L."/>
            <person name="Eisen J.A."/>
            <person name="Fraser C.M."/>
        </authorList>
    </citation>
    <scope>NUCLEOTIDE SEQUENCE [LARGE SCALE GENOMIC DNA]</scope>
    <source>
        <strain>AR39</strain>
    </source>
</reference>
<reference key="3">
    <citation type="journal article" date="2000" name="Nucleic Acids Res.">
        <title>Comparison of whole genome sequences of Chlamydia pneumoniae J138 from Japan and CWL029 from USA.</title>
        <authorList>
            <person name="Shirai M."/>
            <person name="Hirakawa H."/>
            <person name="Kimoto M."/>
            <person name="Tabuchi M."/>
            <person name="Kishi F."/>
            <person name="Ouchi K."/>
            <person name="Shiba T."/>
            <person name="Ishii K."/>
            <person name="Hattori M."/>
            <person name="Kuhara S."/>
            <person name="Nakazawa T."/>
        </authorList>
    </citation>
    <scope>NUCLEOTIDE SEQUENCE [LARGE SCALE GENOMIC DNA]</scope>
    <source>
        <strain>J138</strain>
    </source>
</reference>
<reference key="4">
    <citation type="submission" date="2002-05" db="EMBL/GenBank/DDBJ databases">
        <title>The genome sequence of Chlamydia pneumoniae TW183 and comparison with other Chlamydia strains based on whole genome sequence analysis.</title>
        <authorList>
            <person name="Geng M.M."/>
            <person name="Schuhmacher A."/>
            <person name="Muehldorfer I."/>
            <person name="Bensch K.W."/>
            <person name="Schaefer K.P."/>
            <person name="Schneider S."/>
            <person name="Pohl T."/>
            <person name="Essig A."/>
            <person name="Marre R."/>
            <person name="Melchers K."/>
        </authorList>
    </citation>
    <scope>NUCLEOTIDE SEQUENCE [LARGE SCALE GENOMIC DNA]</scope>
    <source>
        <strain>TW-183</strain>
    </source>
</reference>
<accession>Q9Z7H2</accession>
<accession>Q9JQF0</accession>